<dbReference type="EC" id="4.2.1.-"/>
<dbReference type="EMBL" id="AACD01000062">
    <property type="protein sequence ID" value="EAA59159.1"/>
    <property type="molecule type" value="Genomic_DNA"/>
</dbReference>
<dbReference type="EMBL" id="BN001302">
    <property type="protein sequence ID" value="CBF75152.1"/>
    <property type="molecule type" value="Genomic_DNA"/>
</dbReference>
<dbReference type="RefSeq" id="XP_661498.1">
    <property type="nucleotide sequence ID" value="XM_656406.1"/>
</dbReference>
<dbReference type="SMR" id="Q5B6D6"/>
<dbReference type="FunCoup" id="Q5B6D6">
    <property type="interactions" value="246"/>
</dbReference>
<dbReference type="STRING" id="227321.Q5B6D6"/>
<dbReference type="EnsemblFungi" id="CBF75152">
    <property type="protein sequence ID" value="CBF75152"/>
    <property type="gene ID" value="ANIA_03894"/>
</dbReference>
<dbReference type="KEGG" id="ani:ANIA_03894"/>
<dbReference type="VEuPathDB" id="FungiDB:AN3894"/>
<dbReference type="eggNOG" id="KOG0453">
    <property type="taxonomic scope" value="Eukaryota"/>
</dbReference>
<dbReference type="HOGENOM" id="CLU_006714_2_2_1"/>
<dbReference type="InParanoid" id="Q5B6D6"/>
<dbReference type="OMA" id="KWPETFG"/>
<dbReference type="OrthoDB" id="2224430at2759"/>
<dbReference type="Proteomes" id="UP000000560">
    <property type="component" value="Chromosome II"/>
</dbReference>
<dbReference type="GO" id="GO:0005829">
    <property type="term" value="C:cytosol"/>
    <property type="evidence" value="ECO:0000318"/>
    <property type="project" value="GO_Central"/>
</dbReference>
<dbReference type="GO" id="GO:0005739">
    <property type="term" value="C:mitochondrion"/>
    <property type="evidence" value="ECO:0000318"/>
    <property type="project" value="GO_Central"/>
</dbReference>
<dbReference type="GO" id="GO:0051539">
    <property type="term" value="F:4 iron, 4 sulfur cluster binding"/>
    <property type="evidence" value="ECO:0000318"/>
    <property type="project" value="GO_Central"/>
</dbReference>
<dbReference type="GO" id="GO:0003994">
    <property type="term" value="F:aconitate hydratase activity"/>
    <property type="evidence" value="ECO:0000318"/>
    <property type="project" value="GO_Central"/>
</dbReference>
<dbReference type="GO" id="GO:0046872">
    <property type="term" value="F:metal ion binding"/>
    <property type="evidence" value="ECO:0007669"/>
    <property type="project" value="UniProtKB-KW"/>
</dbReference>
<dbReference type="GO" id="GO:0006099">
    <property type="term" value="P:tricarboxylic acid cycle"/>
    <property type="evidence" value="ECO:0007669"/>
    <property type="project" value="InterPro"/>
</dbReference>
<dbReference type="FunFam" id="3.20.19.10:FF:000002">
    <property type="entry name" value="Aconitate hydratase, mitochondrial"/>
    <property type="match status" value="1"/>
</dbReference>
<dbReference type="FunFam" id="3.30.499.10:FF:000003">
    <property type="entry name" value="Aconitate hydratase, mitochondrial"/>
    <property type="match status" value="1"/>
</dbReference>
<dbReference type="FunFam" id="3.30.499.10:FF:000004">
    <property type="entry name" value="Aconitate hydratase, mitochondrial"/>
    <property type="match status" value="1"/>
</dbReference>
<dbReference type="FunFam" id="3.40.1060.10:FF:000001">
    <property type="entry name" value="Aconitate hydratase, mitochondrial"/>
    <property type="match status" value="1"/>
</dbReference>
<dbReference type="Gene3D" id="3.40.1060.10">
    <property type="entry name" value="Aconitase, Domain 2"/>
    <property type="match status" value="1"/>
</dbReference>
<dbReference type="Gene3D" id="3.30.499.10">
    <property type="entry name" value="Aconitase, domain 3"/>
    <property type="match status" value="2"/>
</dbReference>
<dbReference type="Gene3D" id="3.20.19.10">
    <property type="entry name" value="Aconitase, domain 4"/>
    <property type="match status" value="1"/>
</dbReference>
<dbReference type="InterPro" id="IPR015931">
    <property type="entry name" value="Acnase/IPM_dHydase_lsu_aba_1/3"/>
</dbReference>
<dbReference type="InterPro" id="IPR001030">
    <property type="entry name" value="Acoase/IPM_deHydtase_lsu_aba"/>
</dbReference>
<dbReference type="InterPro" id="IPR015928">
    <property type="entry name" value="Aconitase/3IPM_dehydase_swvl"/>
</dbReference>
<dbReference type="InterPro" id="IPR050926">
    <property type="entry name" value="Aconitase/IPM_isomerase"/>
</dbReference>
<dbReference type="InterPro" id="IPR018136">
    <property type="entry name" value="Aconitase_4Fe-4S_BS"/>
</dbReference>
<dbReference type="InterPro" id="IPR036008">
    <property type="entry name" value="Aconitase_4Fe-4S_dom"/>
</dbReference>
<dbReference type="InterPro" id="IPR015932">
    <property type="entry name" value="Aconitase_dom2"/>
</dbReference>
<dbReference type="InterPro" id="IPR006248">
    <property type="entry name" value="Aconitase_mito-like"/>
</dbReference>
<dbReference type="InterPro" id="IPR000573">
    <property type="entry name" value="AconitaseA/IPMdHydase_ssu_swvl"/>
</dbReference>
<dbReference type="NCBIfam" id="TIGR01340">
    <property type="entry name" value="aconitase_mito"/>
    <property type="match status" value="1"/>
</dbReference>
<dbReference type="NCBIfam" id="NF005558">
    <property type="entry name" value="PRK07229.1"/>
    <property type="match status" value="1"/>
</dbReference>
<dbReference type="PANTHER" id="PTHR43160">
    <property type="entry name" value="ACONITATE HYDRATASE B"/>
    <property type="match status" value="1"/>
</dbReference>
<dbReference type="PANTHER" id="PTHR43160:SF2">
    <property type="entry name" value="HOMOCITRATE DEHYDRATASE, MITOCHONDRIAL"/>
    <property type="match status" value="1"/>
</dbReference>
<dbReference type="Pfam" id="PF00330">
    <property type="entry name" value="Aconitase"/>
    <property type="match status" value="1"/>
</dbReference>
<dbReference type="Pfam" id="PF00694">
    <property type="entry name" value="Aconitase_C"/>
    <property type="match status" value="1"/>
</dbReference>
<dbReference type="PRINTS" id="PR00415">
    <property type="entry name" value="ACONITASE"/>
</dbReference>
<dbReference type="SUPFAM" id="SSF53732">
    <property type="entry name" value="Aconitase iron-sulfur domain"/>
    <property type="match status" value="1"/>
</dbReference>
<dbReference type="SUPFAM" id="SSF52016">
    <property type="entry name" value="LeuD/IlvD-like"/>
    <property type="match status" value="1"/>
</dbReference>
<dbReference type="PROSITE" id="PS01244">
    <property type="entry name" value="ACONITASE_2"/>
    <property type="match status" value="1"/>
</dbReference>
<feature type="transit peptide" description="Mitochondrion" evidence="2">
    <location>
        <begin position="1"/>
        <end position="28"/>
    </location>
</feature>
<feature type="chain" id="PRO_0000425364" description="Putative aconitate hydratase, mitochondrial">
    <location>
        <begin position="29"/>
        <end position="796"/>
    </location>
</feature>
<feature type="region of interest" description="Disordered" evidence="3">
    <location>
        <begin position="540"/>
        <end position="569"/>
    </location>
</feature>
<feature type="binding site" evidence="1">
    <location>
        <position position="108"/>
    </location>
    <ligand>
        <name>substrate</name>
    </ligand>
</feature>
<feature type="binding site" evidence="1">
    <location>
        <begin position="201"/>
        <end position="203"/>
    </location>
    <ligand>
        <name>substrate</name>
    </ligand>
</feature>
<feature type="binding site" evidence="1">
    <location>
        <position position="399"/>
    </location>
    <ligand>
        <name>[4Fe-4S] cluster</name>
        <dbReference type="ChEBI" id="CHEBI:49883"/>
    </ligand>
</feature>
<feature type="binding site" evidence="1">
    <location>
        <position position="462"/>
    </location>
    <ligand>
        <name>[4Fe-4S] cluster</name>
        <dbReference type="ChEBI" id="CHEBI:49883"/>
    </ligand>
</feature>
<feature type="binding site" evidence="1">
    <location>
        <position position="465"/>
    </location>
    <ligand>
        <name>[4Fe-4S] cluster</name>
        <dbReference type="ChEBI" id="CHEBI:49883"/>
    </ligand>
</feature>
<feature type="binding site" evidence="1">
    <location>
        <position position="489"/>
    </location>
    <ligand>
        <name>substrate</name>
    </ligand>
</feature>
<feature type="binding site" evidence="1">
    <location>
        <position position="494"/>
    </location>
    <ligand>
        <name>substrate</name>
    </ligand>
</feature>
<feature type="binding site" evidence="1">
    <location>
        <begin position="685"/>
        <end position="686"/>
    </location>
    <ligand>
        <name>substrate</name>
    </ligand>
</feature>
<proteinExistence type="inferred from homology"/>
<evidence type="ECO:0000250" key="1"/>
<evidence type="ECO:0000255" key="2"/>
<evidence type="ECO:0000256" key="3">
    <source>
        <dbReference type="SAM" id="MobiDB-lite"/>
    </source>
</evidence>
<evidence type="ECO:0000269" key="4">
    <source>
    </source>
</evidence>
<evidence type="ECO:0000305" key="5"/>
<organism>
    <name type="scientific">Emericella nidulans (strain FGSC A4 / ATCC 38163 / CBS 112.46 / NRRL 194 / M139)</name>
    <name type="common">Aspergillus nidulans</name>
    <dbReference type="NCBI Taxonomy" id="227321"/>
    <lineage>
        <taxon>Eukaryota</taxon>
        <taxon>Fungi</taxon>
        <taxon>Dikarya</taxon>
        <taxon>Ascomycota</taxon>
        <taxon>Pezizomycotina</taxon>
        <taxon>Eurotiomycetes</taxon>
        <taxon>Eurotiomycetidae</taxon>
        <taxon>Eurotiales</taxon>
        <taxon>Aspergillaceae</taxon>
        <taxon>Aspergillus</taxon>
        <taxon>Aspergillus subgen. Nidulantes</taxon>
    </lineage>
</organism>
<comment type="function">
    <text evidence="4">Has no detectable activity towards cis-acontiate or cis-homoaconitate.</text>
</comment>
<comment type="subcellular location">
    <subcellularLocation>
        <location evidence="5">Mitochondrion</location>
    </subcellularLocation>
</comment>
<comment type="miscellaneous">
    <text>The fermenting yeast S.cerevisiae has 2 aconitases, ACO1 essential for the citric acid cycle, and ACO2 specifically and exclusively contributing to lysine biosynthesis. In contrast, in respiring filamentous fungi the ACO2 homologs (acoB) seem enzymatically inactive and the ACO1 homolog (acoA) is solely responsible for these functions.</text>
</comment>
<comment type="similarity">
    <text evidence="5">Belongs to the aconitase/IPM isomerase family.</text>
</comment>
<name>ACON2_EMENI</name>
<keyword id="KW-0408">Iron</keyword>
<keyword id="KW-0411">Iron-sulfur</keyword>
<keyword id="KW-0456">Lyase</keyword>
<keyword id="KW-0479">Metal-binding</keyword>
<keyword id="KW-0496">Mitochondrion</keyword>
<keyword id="KW-1185">Reference proteome</keyword>
<keyword id="KW-0809">Transit peptide</keyword>
<reference key="1">
    <citation type="journal article" date="2005" name="Nature">
        <title>Sequencing of Aspergillus nidulans and comparative analysis with A. fumigatus and A. oryzae.</title>
        <authorList>
            <person name="Galagan J.E."/>
            <person name="Calvo S.E."/>
            <person name="Cuomo C."/>
            <person name="Ma L.-J."/>
            <person name="Wortman J.R."/>
            <person name="Batzoglou S."/>
            <person name="Lee S.-I."/>
            <person name="Bastuerkmen M."/>
            <person name="Spevak C.C."/>
            <person name="Clutterbuck J."/>
            <person name="Kapitonov V."/>
            <person name="Jurka J."/>
            <person name="Scazzocchio C."/>
            <person name="Farman M.L."/>
            <person name="Butler J."/>
            <person name="Purcell S."/>
            <person name="Harris S."/>
            <person name="Braus G.H."/>
            <person name="Draht O."/>
            <person name="Busch S."/>
            <person name="D'Enfert C."/>
            <person name="Bouchier C."/>
            <person name="Goldman G.H."/>
            <person name="Bell-Pedersen D."/>
            <person name="Griffiths-Jones S."/>
            <person name="Doonan J.H."/>
            <person name="Yu J."/>
            <person name="Vienken K."/>
            <person name="Pain A."/>
            <person name="Freitag M."/>
            <person name="Selker E.U."/>
            <person name="Archer D.B."/>
            <person name="Penalva M.A."/>
            <person name="Oakley B.R."/>
            <person name="Momany M."/>
            <person name="Tanaka T."/>
            <person name="Kumagai T."/>
            <person name="Asai K."/>
            <person name="Machida M."/>
            <person name="Nierman W.C."/>
            <person name="Denning D.W."/>
            <person name="Caddick M.X."/>
            <person name="Hynes M."/>
            <person name="Paoletti M."/>
            <person name="Fischer R."/>
            <person name="Miller B.L."/>
            <person name="Dyer P.S."/>
            <person name="Sachs M.S."/>
            <person name="Osmani S.A."/>
            <person name="Birren B.W."/>
        </authorList>
    </citation>
    <scope>NUCLEOTIDE SEQUENCE [LARGE SCALE GENOMIC DNA]</scope>
    <source>
        <strain>FGSC A4 / ATCC 38163 / CBS 112.46 / NRRL 194 / M139</strain>
    </source>
</reference>
<reference key="2">
    <citation type="journal article" date="2009" name="Fungal Genet. Biol.">
        <title>The 2008 update of the Aspergillus nidulans genome annotation: a community effort.</title>
        <authorList>
            <person name="Wortman J.R."/>
            <person name="Gilsenan J.M."/>
            <person name="Joardar V."/>
            <person name="Deegan J."/>
            <person name="Clutterbuck J."/>
            <person name="Andersen M.R."/>
            <person name="Archer D."/>
            <person name="Bencina M."/>
            <person name="Braus G."/>
            <person name="Coutinho P."/>
            <person name="von Dohren H."/>
            <person name="Doonan J."/>
            <person name="Driessen A.J."/>
            <person name="Durek P."/>
            <person name="Espeso E."/>
            <person name="Fekete E."/>
            <person name="Flipphi M."/>
            <person name="Estrada C.G."/>
            <person name="Geysens S."/>
            <person name="Goldman G."/>
            <person name="de Groot P.W."/>
            <person name="Hansen K."/>
            <person name="Harris S.D."/>
            <person name="Heinekamp T."/>
            <person name="Helmstaedt K."/>
            <person name="Henrissat B."/>
            <person name="Hofmann G."/>
            <person name="Homan T."/>
            <person name="Horio T."/>
            <person name="Horiuchi H."/>
            <person name="James S."/>
            <person name="Jones M."/>
            <person name="Karaffa L."/>
            <person name="Karanyi Z."/>
            <person name="Kato M."/>
            <person name="Keller N."/>
            <person name="Kelly D.E."/>
            <person name="Kiel J.A."/>
            <person name="Kim J.M."/>
            <person name="van der Klei I.J."/>
            <person name="Klis F.M."/>
            <person name="Kovalchuk A."/>
            <person name="Krasevec N."/>
            <person name="Kubicek C.P."/>
            <person name="Liu B."/>
            <person name="Maccabe A."/>
            <person name="Meyer V."/>
            <person name="Mirabito P."/>
            <person name="Miskei M."/>
            <person name="Mos M."/>
            <person name="Mullins J."/>
            <person name="Nelson D.R."/>
            <person name="Nielsen J."/>
            <person name="Oakley B.R."/>
            <person name="Osmani S.A."/>
            <person name="Pakula T."/>
            <person name="Paszewski A."/>
            <person name="Paulsen I."/>
            <person name="Pilsyk S."/>
            <person name="Pocsi I."/>
            <person name="Punt P.J."/>
            <person name="Ram A.F."/>
            <person name="Ren Q."/>
            <person name="Robellet X."/>
            <person name="Robson G."/>
            <person name="Seiboth B."/>
            <person name="van Solingen P."/>
            <person name="Specht T."/>
            <person name="Sun J."/>
            <person name="Taheri-Talesh N."/>
            <person name="Takeshita N."/>
            <person name="Ussery D."/>
            <person name="vanKuyk P.A."/>
            <person name="Visser H."/>
            <person name="van de Vondervoort P.J."/>
            <person name="de Vries R.P."/>
            <person name="Walton J."/>
            <person name="Xiang X."/>
            <person name="Xiong Y."/>
            <person name="Zeng A.P."/>
            <person name="Brandt B.W."/>
            <person name="Cornell M.J."/>
            <person name="van den Hondel C.A."/>
            <person name="Visser J."/>
            <person name="Oliver S.G."/>
            <person name="Turner G."/>
        </authorList>
    </citation>
    <scope>GENOME REANNOTATION</scope>
    <source>
        <strain>FGSC A4 / ATCC 38163 / CBS 112.46 / NRRL 194 / M139</strain>
    </source>
</reference>
<reference key="3">
    <citation type="journal article" date="2012" name="Mol. Microbiol.">
        <title>The fungal alpha-aminoadipate pathway for lysine biosynthesis requires two enzymes of the aconitase family for the isomerization of homocitrate to homoisocitrate.</title>
        <authorList>
            <person name="Fazius F."/>
            <person name="Shelest E."/>
            <person name="Gebhardt P."/>
            <person name="Brock M."/>
        </authorList>
    </citation>
    <scope>FUNCTION</scope>
</reference>
<sequence>MLRQIVSQRSAARRQLIDQLAPCLRRGLATATDSTPTSSRMPPYSKIVQNLEQVRKVLGSSRALTLAEKILYSHLDNAEESLLTGTNNGRDIRGKADLKLKPDRVAMQDASAQMALLQFMSCGLPSTAVPASIHCDHMIVGERGADTDLPASIQGNKEVFDFLESASKRYGIEFWPPGAGIIHQSVLENYSAPGLMMLGTDSHTPNAGGLGAIAIGVGGADAVDALVDAPWELKAPRILGVRLEGKLQGWAAPKDIILHLAGKLTVRGGTGFVIEYHGPGVETLSTTGMATICNMGAEVGATTSLFPFSPNHVPYLKATNRADVAEAAAKIASAGSSSLLRADTSAEYDELITIDLSTLEPHINGPFTPDLSVPLSRFAETVRKNNWPETFNAGLIGSCTNSSYEDMTRAEHLVKQANAAGLKPKADLFITPGSEQIRATLDRDQTLSTFSSAGGTVLANACGPCIGQWKRTDDVPKGTDNAIFTSYNRNFPGRNDGNRRTMNFLASPELVTALTYAGSTTFNPVTDSITTPSGSEFRFEPPTGQDLPSKGFEAGNPAFQPSAPVPDSSVEVKVSPTSTRLALLEPFAPFPNSDLQNLSVLYKVKGQCTTDTISAAGPWLKYKGHLPNISANTLIGAVNAATGETNVAYDEAGKQHTIPDLAAQWKAQGREWLVVAEENYGEGSAREHAALQPRYLGGRVILAKSFARIHETNLKKQGVVPLTFADKADYDRIDACDVVATEGLYETLKNGGKGEVKLRVTKKSGEEIVIPVKHTLSADQSSFILAGSALNVLSKR</sequence>
<gene>
    <name type="primary">acoB</name>
    <name type="ORF">AN3894</name>
</gene>
<protein>
    <recommendedName>
        <fullName>Putative aconitate hydratase, mitochondrial</fullName>
    </recommendedName>
    <alternativeName>
        <fullName>Aconitase 2</fullName>
        <ecNumber>4.2.1.-</ecNumber>
    </alternativeName>
</protein>
<accession>Q5B6D6</accession>
<accession>C8V6B4</accession>